<evidence type="ECO:0000255" key="1">
    <source>
        <dbReference type="HAMAP-Rule" id="MF_00651"/>
    </source>
</evidence>
<reference key="1">
    <citation type="journal article" date="2006" name="Appl. Environ. Microbiol.">
        <title>Complete genome sequence of the marine, chemolithoautotrophic, ammonia-oxidizing bacterium Nitrosococcus oceani ATCC 19707.</title>
        <authorList>
            <person name="Klotz M.G."/>
            <person name="Arp D.J."/>
            <person name="Chain P.S.G."/>
            <person name="El-Sheikh A.F."/>
            <person name="Hauser L.J."/>
            <person name="Hommes N.G."/>
            <person name="Larimer F.W."/>
            <person name="Malfatti S.A."/>
            <person name="Norton J.M."/>
            <person name="Poret-Peterson A.T."/>
            <person name="Vergez L.M."/>
            <person name="Ward B.B."/>
        </authorList>
    </citation>
    <scope>NUCLEOTIDE SEQUENCE [LARGE SCALE GENOMIC DNA]</scope>
    <source>
        <strain>ATCC 19707 / BCRC 17464 / JCM 30415 / NCIMB 11848 / C-107</strain>
    </source>
</reference>
<proteinExistence type="inferred from homology"/>
<name>YQGF_NITOC</name>
<organism>
    <name type="scientific">Nitrosococcus oceani (strain ATCC 19707 / BCRC 17464 / JCM 30415 / NCIMB 11848 / C-107)</name>
    <dbReference type="NCBI Taxonomy" id="323261"/>
    <lineage>
        <taxon>Bacteria</taxon>
        <taxon>Pseudomonadati</taxon>
        <taxon>Pseudomonadota</taxon>
        <taxon>Gammaproteobacteria</taxon>
        <taxon>Chromatiales</taxon>
        <taxon>Chromatiaceae</taxon>
        <taxon>Nitrosococcus</taxon>
    </lineage>
</organism>
<gene>
    <name type="ordered locus">Noc_0367</name>
</gene>
<comment type="function">
    <text evidence="1">Could be a nuclease involved in processing of the 5'-end of pre-16S rRNA.</text>
</comment>
<comment type="subcellular location">
    <subcellularLocation>
        <location evidence="1">Cytoplasm</location>
    </subcellularLocation>
</comment>
<comment type="similarity">
    <text evidence="1">Belongs to the YqgF nuclease family.</text>
</comment>
<dbReference type="EC" id="3.1.-.-" evidence="1"/>
<dbReference type="EMBL" id="CP000127">
    <property type="protein sequence ID" value="ABA56893.1"/>
    <property type="molecule type" value="Genomic_DNA"/>
</dbReference>
<dbReference type="SMR" id="Q3JE53"/>
<dbReference type="FunCoup" id="Q3JE53">
    <property type="interactions" value="345"/>
</dbReference>
<dbReference type="STRING" id="323261.Noc_0367"/>
<dbReference type="KEGG" id="noc:Noc_0367"/>
<dbReference type="eggNOG" id="COG0816">
    <property type="taxonomic scope" value="Bacteria"/>
</dbReference>
<dbReference type="HOGENOM" id="CLU_098240_3_0_6"/>
<dbReference type="InParanoid" id="Q3JE53"/>
<dbReference type="Proteomes" id="UP000006838">
    <property type="component" value="Chromosome"/>
</dbReference>
<dbReference type="GO" id="GO:0005829">
    <property type="term" value="C:cytosol"/>
    <property type="evidence" value="ECO:0007669"/>
    <property type="project" value="TreeGrafter"/>
</dbReference>
<dbReference type="GO" id="GO:0004518">
    <property type="term" value="F:nuclease activity"/>
    <property type="evidence" value="ECO:0007669"/>
    <property type="project" value="UniProtKB-KW"/>
</dbReference>
<dbReference type="GO" id="GO:0000967">
    <property type="term" value="P:rRNA 5'-end processing"/>
    <property type="evidence" value="ECO:0007669"/>
    <property type="project" value="UniProtKB-UniRule"/>
</dbReference>
<dbReference type="CDD" id="cd16964">
    <property type="entry name" value="YqgF"/>
    <property type="match status" value="1"/>
</dbReference>
<dbReference type="Gene3D" id="3.30.420.140">
    <property type="entry name" value="YqgF/RNase H-like domain"/>
    <property type="match status" value="1"/>
</dbReference>
<dbReference type="HAMAP" id="MF_00651">
    <property type="entry name" value="Nuclease_YqgF"/>
    <property type="match status" value="1"/>
</dbReference>
<dbReference type="InterPro" id="IPR012337">
    <property type="entry name" value="RNaseH-like_sf"/>
</dbReference>
<dbReference type="InterPro" id="IPR005227">
    <property type="entry name" value="YqgF"/>
</dbReference>
<dbReference type="InterPro" id="IPR006641">
    <property type="entry name" value="YqgF/RNaseH-like_dom"/>
</dbReference>
<dbReference type="InterPro" id="IPR037027">
    <property type="entry name" value="YqgF/RNaseH-like_dom_sf"/>
</dbReference>
<dbReference type="NCBIfam" id="TIGR00250">
    <property type="entry name" value="RNAse_H_YqgF"/>
    <property type="match status" value="1"/>
</dbReference>
<dbReference type="PANTHER" id="PTHR33317">
    <property type="entry name" value="POLYNUCLEOTIDYL TRANSFERASE, RIBONUCLEASE H-LIKE SUPERFAMILY PROTEIN"/>
    <property type="match status" value="1"/>
</dbReference>
<dbReference type="PANTHER" id="PTHR33317:SF4">
    <property type="entry name" value="POLYNUCLEOTIDYL TRANSFERASE, RIBONUCLEASE H-LIKE SUPERFAMILY PROTEIN"/>
    <property type="match status" value="1"/>
</dbReference>
<dbReference type="Pfam" id="PF03652">
    <property type="entry name" value="RuvX"/>
    <property type="match status" value="1"/>
</dbReference>
<dbReference type="SMART" id="SM00732">
    <property type="entry name" value="YqgFc"/>
    <property type="match status" value="1"/>
</dbReference>
<dbReference type="SUPFAM" id="SSF53098">
    <property type="entry name" value="Ribonuclease H-like"/>
    <property type="match status" value="1"/>
</dbReference>
<sequence>MSATLDAPSPSKPRIVLGFDFGLRYIGVAVGQEVTHSANPLTTLKAHEGNPDWNQITQLIRQWNPDLLIVGLPLNMDQSEQFLTKAARRFGHRLHGRYGLAVEWVDERLSTVEARERLNIKSSASGRRQGIDQMAAQCILQTWLTEQQTIRH</sequence>
<keyword id="KW-0963">Cytoplasm</keyword>
<keyword id="KW-0378">Hydrolase</keyword>
<keyword id="KW-0540">Nuclease</keyword>
<keyword id="KW-1185">Reference proteome</keyword>
<keyword id="KW-0690">Ribosome biogenesis</keyword>
<protein>
    <recommendedName>
        <fullName evidence="1">Putative pre-16S rRNA nuclease</fullName>
        <ecNumber evidence="1">3.1.-.-</ecNumber>
    </recommendedName>
</protein>
<accession>Q3JE53</accession>
<feature type="chain" id="PRO_0000257556" description="Putative pre-16S rRNA nuclease">
    <location>
        <begin position="1"/>
        <end position="152"/>
    </location>
</feature>